<organism>
    <name type="scientific">Clostridium botulinum (strain Alaska E43 / Type E3)</name>
    <dbReference type="NCBI Taxonomy" id="508767"/>
    <lineage>
        <taxon>Bacteria</taxon>
        <taxon>Bacillati</taxon>
        <taxon>Bacillota</taxon>
        <taxon>Clostridia</taxon>
        <taxon>Eubacteriales</taxon>
        <taxon>Clostridiaceae</taxon>
        <taxon>Clostridium</taxon>
    </lineage>
</organism>
<accession>B2V168</accession>
<comment type="function">
    <text evidence="1">Catalyzes a mechanistically unusual reaction, the ATP-dependent insertion of CO2 between the N7 and N8 nitrogen atoms of 7,8-diaminopelargonic acid (DAPA, also called 7,8-diammoniononanoate) to form a ureido ring.</text>
</comment>
<comment type="catalytic activity">
    <reaction evidence="1">
        <text>(7R,8S)-7,8-diammoniononanoate + CO2 + ATP = (4R,5S)-dethiobiotin + ADP + phosphate + 3 H(+)</text>
        <dbReference type="Rhea" id="RHEA:15805"/>
        <dbReference type="ChEBI" id="CHEBI:15378"/>
        <dbReference type="ChEBI" id="CHEBI:16526"/>
        <dbReference type="ChEBI" id="CHEBI:30616"/>
        <dbReference type="ChEBI" id="CHEBI:43474"/>
        <dbReference type="ChEBI" id="CHEBI:149469"/>
        <dbReference type="ChEBI" id="CHEBI:149473"/>
        <dbReference type="ChEBI" id="CHEBI:456216"/>
        <dbReference type="EC" id="6.3.3.3"/>
    </reaction>
</comment>
<comment type="cofactor">
    <cofactor evidence="1">
        <name>Mg(2+)</name>
        <dbReference type="ChEBI" id="CHEBI:18420"/>
    </cofactor>
</comment>
<comment type="pathway">
    <text evidence="1">Cofactor biosynthesis; biotin biosynthesis; biotin from 7,8-diaminononanoate: step 1/2.</text>
</comment>
<comment type="subunit">
    <text evidence="1">Homodimer.</text>
</comment>
<comment type="subcellular location">
    <subcellularLocation>
        <location evidence="1">Cytoplasm</location>
    </subcellularLocation>
</comment>
<comment type="similarity">
    <text evidence="1">Belongs to the dethiobiotin synthetase family.</text>
</comment>
<dbReference type="EC" id="6.3.3.3" evidence="1"/>
<dbReference type="EMBL" id="CP001078">
    <property type="protein sequence ID" value="ACD52201.1"/>
    <property type="molecule type" value="Genomic_DNA"/>
</dbReference>
<dbReference type="RefSeq" id="WP_012450400.1">
    <property type="nucleotide sequence ID" value="NC_010723.1"/>
</dbReference>
<dbReference type="SMR" id="B2V168"/>
<dbReference type="KEGG" id="cbt:CLH_0686"/>
<dbReference type="HOGENOM" id="CLU_072551_3_0_9"/>
<dbReference type="UniPathway" id="UPA00078">
    <property type="reaction ID" value="UER00161"/>
</dbReference>
<dbReference type="GO" id="GO:0005829">
    <property type="term" value="C:cytosol"/>
    <property type="evidence" value="ECO:0007669"/>
    <property type="project" value="TreeGrafter"/>
</dbReference>
<dbReference type="GO" id="GO:0005524">
    <property type="term" value="F:ATP binding"/>
    <property type="evidence" value="ECO:0007669"/>
    <property type="project" value="UniProtKB-UniRule"/>
</dbReference>
<dbReference type="GO" id="GO:0004141">
    <property type="term" value="F:dethiobiotin synthase activity"/>
    <property type="evidence" value="ECO:0007669"/>
    <property type="project" value="UniProtKB-UniRule"/>
</dbReference>
<dbReference type="GO" id="GO:0000287">
    <property type="term" value="F:magnesium ion binding"/>
    <property type="evidence" value="ECO:0007669"/>
    <property type="project" value="UniProtKB-UniRule"/>
</dbReference>
<dbReference type="GO" id="GO:0009102">
    <property type="term" value="P:biotin biosynthetic process"/>
    <property type="evidence" value="ECO:0007669"/>
    <property type="project" value="UniProtKB-UniRule"/>
</dbReference>
<dbReference type="CDD" id="cd03109">
    <property type="entry name" value="DTBS"/>
    <property type="match status" value="1"/>
</dbReference>
<dbReference type="Gene3D" id="3.40.50.300">
    <property type="entry name" value="P-loop containing nucleotide triphosphate hydrolases"/>
    <property type="match status" value="1"/>
</dbReference>
<dbReference type="HAMAP" id="MF_00336">
    <property type="entry name" value="BioD"/>
    <property type="match status" value="1"/>
</dbReference>
<dbReference type="InterPro" id="IPR004472">
    <property type="entry name" value="DTB_synth_BioD"/>
</dbReference>
<dbReference type="InterPro" id="IPR027417">
    <property type="entry name" value="P-loop_NTPase"/>
</dbReference>
<dbReference type="NCBIfam" id="TIGR00347">
    <property type="entry name" value="bioD"/>
    <property type="match status" value="1"/>
</dbReference>
<dbReference type="PANTHER" id="PTHR43210:SF2">
    <property type="entry name" value="ATP-DEPENDENT DETHIOBIOTIN SYNTHETASE BIOD 2"/>
    <property type="match status" value="1"/>
</dbReference>
<dbReference type="PANTHER" id="PTHR43210">
    <property type="entry name" value="DETHIOBIOTIN SYNTHETASE"/>
    <property type="match status" value="1"/>
</dbReference>
<dbReference type="Pfam" id="PF13500">
    <property type="entry name" value="AAA_26"/>
    <property type="match status" value="1"/>
</dbReference>
<dbReference type="PIRSF" id="PIRSF006755">
    <property type="entry name" value="DTB_synth"/>
    <property type="match status" value="1"/>
</dbReference>
<dbReference type="SUPFAM" id="SSF52540">
    <property type="entry name" value="P-loop containing nucleoside triphosphate hydrolases"/>
    <property type="match status" value="1"/>
</dbReference>
<gene>
    <name evidence="1" type="primary">bioD</name>
    <name type="ordered locus">CLH_0686</name>
</gene>
<proteinExistence type="inferred from homology"/>
<feature type="chain" id="PRO_1000119865" description="ATP-dependent dethiobiotin synthetase BioD">
    <location>
        <begin position="1"/>
        <end position="227"/>
    </location>
</feature>
<feature type="active site" evidence="1">
    <location>
        <position position="38"/>
    </location>
</feature>
<feature type="binding site" evidence="1">
    <location>
        <begin position="13"/>
        <end position="18"/>
    </location>
    <ligand>
        <name>ATP</name>
        <dbReference type="ChEBI" id="CHEBI:30616"/>
    </ligand>
</feature>
<feature type="binding site" evidence="1">
    <location>
        <position position="17"/>
    </location>
    <ligand>
        <name>Mg(2+)</name>
        <dbReference type="ChEBI" id="CHEBI:18420"/>
    </ligand>
</feature>
<feature type="binding site" evidence="1">
    <location>
        <position position="42"/>
    </location>
    <ligand>
        <name>substrate</name>
    </ligand>
</feature>
<feature type="binding site" evidence="1">
    <location>
        <position position="55"/>
    </location>
    <ligand>
        <name>ATP</name>
        <dbReference type="ChEBI" id="CHEBI:30616"/>
    </ligand>
</feature>
<feature type="binding site" evidence="1">
    <location>
        <position position="55"/>
    </location>
    <ligand>
        <name>Mg(2+)</name>
        <dbReference type="ChEBI" id="CHEBI:18420"/>
    </ligand>
</feature>
<feature type="binding site" evidence="1">
    <location>
        <begin position="116"/>
        <end position="119"/>
    </location>
    <ligand>
        <name>ATP</name>
        <dbReference type="ChEBI" id="CHEBI:30616"/>
    </ligand>
</feature>
<feature type="binding site" evidence="1">
    <location>
        <position position="116"/>
    </location>
    <ligand>
        <name>Mg(2+)</name>
        <dbReference type="ChEBI" id="CHEBI:18420"/>
    </ligand>
</feature>
<feature type="binding site" evidence="1">
    <location>
        <begin position="179"/>
        <end position="180"/>
    </location>
    <ligand>
        <name>ATP</name>
        <dbReference type="ChEBI" id="CHEBI:30616"/>
    </ligand>
</feature>
<protein>
    <recommendedName>
        <fullName evidence="1">ATP-dependent dethiobiotin synthetase BioD</fullName>
        <ecNumber evidence="1">6.3.3.3</ecNumber>
    </recommendedName>
    <alternativeName>
        <fullName evidence="1">DTB synthetase</fullName>
        <shortName evidence="1">DTBS</shortName>
    </alternativeName>
    <alternativeName>
        <fullName evidence="1">Dethiobiotin synthase</fullName>
    </alternativeName>
</protein>
<evidence type="ECO:0000255" key="1">
    <source>
        <dbReference type="HAMAP-Rule" id="MF_00336"/>
    </source>
</evidence>
<keyword id="KW-0067">ATP-binding</keyword>
<keyword id="KW-0093">Biotin biosynthesis</keyword>
<keyword id="KW-0963">Cytoplasm</keyword>
<keyword id="KW-0436">Ligase</keyword>
<keyword id="KW-0460">Magnesium</keyword>
<keyword id="KW-0479">Metal-binding</keyword>
<keyword id="KW-0547">Nucleotide-binding</keyword>
<sequence length="227" mass="25558">MAKGVFITATNTDIGKTYITALIVKKLREANINCGYYKAVLSGAEIINNNIVAGDAKYVYNVANIKGNPNKCVSYIFEQPVSPHLAAKLNNVHISMDKIVDDFNYICNEHDYITVEGSGGIVCPIYYDKEKIMLTDIIKKLKIPIILVSSSGLGSINGTILTLEYIKKHNITVNSIILNNYDKNNIIHIDNRIILEEMTNLPVYICEQYSKDIDIPLKELKQFYDFI</sequence>
<name>BIOD_CLOBA</name>
<reference key="1">
    <citation type="submission" date="2008-05" db="EMBL/GenBank/DDBJ databases">
        <title>Complete genome sequence of Clostridium botulinum E3 str. Alaska E43.</title>
        <authorList>
            <person name="Brinkac L.M."/>
            <person name="Brown J.L."/>
            <person name="Bruce D."/>
            <person name="Detter C."/>
            <person name="Munk C."/>
            <person name="Smith L.A."/>
            <person name="Smith T.J."/>
            <person name="Sutton G."/>
            <person name="Brettin T.S."/>
        </authorList>
    </citation>
    <scope>NUCLEOTIDE SEQUENCE [LARGE SCALE GENOMIC DNA]</scope>
    <source>
        <strain>Alaska E43 / Type E3</strain>
    </source>
</reference>